<name>YBEY_CLOBJ</name>
<gene>
    <name evidence="1" type="primary">ybeY</name>
    <name type="ordered locus">CLM_3343</name>
</gene>
<accession>C1FVS9</accession>
<organism>
    <name type="scientific">Clostridium botulinum (strain Kyoto / Type A2)</name>
    <dbReference type="NCBI Taxonomy" id="536232"/>
    <lineage>
        <taxon>Bacteria</taxon>
        <taxon>Bacillati</taxon>
        <taxon>Bacillota</taxon>
        <taxon>Clostridia</taxon>
        <taxon>Eubacteriales</taxon>
        <taxon>Clostridiaceae</taxon>
        <taxon>Clostridium</taxon>
    </lineage>
</organism>
<comment type="function">
    <text evidence="1">Single strand-specific metallo-endoribonuclease involved in late-stage 70S ribosome quality control and in maturation of the 3' terminus of the 16S rRNA.</text>
</comment>
<comment type="cofactor">
    <cofactor evidence="1">
        <name>Zn(2+)</name>
        <dbReference type="ChEBI" id="CHEBI:29105"/>
    </cofactor>
    <text evidence="1">Binds 1 zinc ion.</text>
</comment>
<comment type="subcellular location">
    <subcellularLocation>
        <location evidence="1">Cytoplasm</location>
    </subcellularLocation>
</comment>
<comment type="similarity">
    <text evidence="1">Belongs to the endoribonuclease YbeY family.</text>
</comment>
<feature type="chain" id="PRO_1000199964" description="Endoribonuclease YbeY">
    <location>
        <begin position="1"/>
        <end position="166"/>
    </location>
</feature>
<feature type="binding site" evidence="1">
    <location>
        <position position="132"/>
    </location>
    <ligand>
        <name>Zn(2+)</name>
        <dbReference type="ChEBI" id="CHEBI:29105"/>
        <note>catalytic</note>
    </ligand>
</feature>
<feature type="binding site" evidence="1">
    <location>
        <position position="136"/>
    </location>
    <ligand>
        <name>Zn(2+)</name>
        <dbReference type="ChEBI" id="CHEBI:29105"/>
        <note>catalytic</note>
    </ligand>
</feature>
<feature type="binding site" evidence="1">
    <location>
        <position position="142"/>
    </location>
    <ligand>
        <name>Zn(2+)</name>
        <dbReference type="ChEBI" id="CHEBI:29105"/>
        <note>catalytic</note>
    </ligand>
</feature>
<proteinExistence type="inferred from homology"/>
<dbReference type="EC" id="3.1.-.-" evidence="1"/>
<dbReference type="EMBL" id="CP001581">
    <property type="protein sequence ID" value="ACO84624.1"/>
    <property type="molecule type" value="Genomic_DNA"/>
</dbReference>
<dbReference type="RefSeq" id="WP_012704323.1">
    <property type="nucleotide sequence ID" value="NC_012563.1"/>
</dbReference>
<dbReference type="SMR" id="C1FVS9"/>
<dbReference type="KEGG" id="cby:CLM_3343"/>
<dbReference type="eggNOG" id="COG0319">
    <property type="taxonomic scope" value="Bacteria"/>
</dbReference>
<dbReference type="HOGENOM" id="CLU_106710_3_0_9"/>
<dbReference type="Proteomes" id="UP000001374">
    <property type="component" value="Chromosome"/>
</dbReference>
<dbReference type="GO" id="GO:0005737">
    <property type="term" value="C:cytoplasm"/>
    <property type="evidence" value="ECO:0007669"/>
    <property type="project" value="UniProtKB-SubCell"/>
</dbReference>
<dbReference type="GO" id="GO:0004222">
    <property type="term" value="F:metalloendopeptidase activity"/>
    <property type="evidence" value="ECO:0007669"/>
    <property type="project" value="InterPro"/>
</dbReference>
<dbReference type="GO" id="GO:0004521">
    <property type="term" value="F:RNA endonuclease activity"/>
    <property type="evidence" value="ECO:0007669"/>
    <property type="project" value="UniProtKB-UniRule"/>
</dbReference>
<dbReference type="GO" id="GO:0008270">
    <property type="term" value="F:zinc ion binding"/>
    <property type="evidence" value="ECO:0007669"/>
    <property type="project" value="UniProtKB-UniRule"/>
</dbReference>
<dbReference type="GO" id="GO:0006364">
    <property type="term" value="P:rRNA processing"/>
    <property type="evidence" value="ECO:0007669"/>
    <property type="project" value="UniProtKB-UniRule"/>
</dbReference>
<dbReference type="Gene3D" id="3.40.390.30">
    <property type="entry name" value="Metalloproteases ('zincins'), catalytic domain"/>
    <property type="match status" value="1"/>
</dbReference>
<dbReference type="HAMAP" id="MF_00009">
    <property type="entry name" value="Endoribonucl_YbeY"/>
    <property type="match status" value="1"/>
</dbReference>
<dbReference type="InterPro" id="IPR023091">
    <property type="entry name" value="MetalPrtase_cat_dom_sf_prd"/>
</dbReference>
<dbReference type="InterPro" id="IPR002036">
    <property type="entry name" value="YbeY"/>
</dbReference>
<dbReference type="InterPro" id="IPR020549">
    <property type="entry name" value="YbeY_CS"/>
</dbReference>
<dbReference type="NCBIfam" id="TIGR00043">
    <property type="entry name" value="rRNA maturation RNase YbeY"/>
    <property type="match status" value="1"/>
</dbReference>
<dbReference type="PANTHER" id="PTHR46986">
    <property type="entry name" value="ENDORIBONUCLEASE YBEY, CHLOROPLASTIC"/>
    <property type="match status" value="1"/>
</dbReference>
<dbReference type="PANTHER" id="PTHR46986:SF1">
    <property type="entry name" value="ENDORIBONUCLEASE YBEY, CHLOROPLASTIC"/>
    <property type="match status" value="1"/>
</dbReference>
<dbReference type="Pfam" id="PF02130">
    <property type="entry name" value="YbeY"/>
    <property type="match status" value="1"/>
</dbReference>
<dbReference type="SUPFAM" id="SSF55486">
    <property type="entry name" value="Metalloproteases ('zincins'), catalytic domain"/>
    <property type="match status" value="1"/>
</dbReference>
<dbReference type="PROSITE" id="PS01306">
    <property type="entry name" value="UPF0054"/>
    <property type="match status" value="1"/>
</dbReference>
<protein>
    <recommendedName>
        <fullName evidence="1">Endoribonuclease YbeY</fullName>
        <ecNumber evidence="1">3.1.-.-</ecNumber>
    </recommendedName>
</protein>
<reference key="1">
    <citation type="submission" date="2008-10" db="EMBL/GenBank/DDBJ databases">
        <title>Genome sequence of Clostridium botulinum A2 Kyoto.</title>
        <authorList>
            <person name="Shrivastava S."/>
            <person name="Brinkac L.M."/>
            <person name="Brown J.L."/>
            <person name="Bruce D."/>
            <person name="Detter C.C."/>
            <person name="Johnson E.A."/>
            <person name="Munk C.A."/>
            <person name="Smith L.A."/>
            <person name="Smith T.J."/>
            <person name="Sutton G."/>
            <person name="Brettin T.S."/>
        </authorList>
    </citation>
    <scope>NUCLEOTIDE SEQUENCE [LARGE SCALE GENOMIC DNA]</scope>
    <source>
        <strain>Kyoto / Type A2</strain>
    </source>
</reference>
<sequence>MIYIDNRQNKIKVNEELENKIKEIIDYALKEEKVNIDYEISVVFIDNNSIKEINKDYRNIDKATDVLSFPMLDYEEGEVFKDIYLNYEFDESDLDEGNLVLGDIALSLEKAEEQSKEFGHSFLRETCYLTIHSVLHLLGYDHMEEDEKVIMRQREEEILKSFNLHR</sequence>
<keyword id="KW-0963">Cytoplasm</keyword>
<keyword id="KW-0255">Endonuclease</keyword>
<keyword id="KW-0378">Hydrolase</keyword>
<keyword id="KW-0479">Metal-binding</keyword>
<keyword id="KW-0540">Nuclease</keyword>
<keyword id="KW-0690">Ribosome biogenesis</keyword>
<keyword id="KW-0698">rRNA processing</keyword>
<keyword id="KW-0862">Zinc</keyword>
<evidence type="ECO:0000255" key="1">
    <source>
        <dbReference type="HAMAP-Rule" id="MF_00009"/>
    </source>
</evidence>